<comment type="function">
    <text evidence="1">Probably functions as a guanine nucleotide exchange factor.</text>
</comment>
<comment type="alternative products">
    <event type="alternative splicing"/>
    <isoform>
        <id>Q86YR7-1</id>
        <name>1</name>
        <sequence type="displayed"/>
    </isoform>
    <isoform>
        <id>Q86YR7-2</id>
        <name>2</name>
        <sequence type="described" ref="VSP_033874 VSP_033875"/>
    </isoform>
    <isoform>
        <id>Q86YR7-3</id>
        <name>3</name>
        <sequence type="described" ref="VSP_033872 VSP_033873"/>
    </isoform>
    <isoform>
        <id>Q86YR7-4</id>
        <name>4</name>
        <sequence type="described" ref="VSP_033876"/>
    </isoform>
</comment>
<comment type="tissue specificity">
    <text evidence="10">Significantly expressed in brain and modestly in pancreas, brain and testis.</text>
</comment>
<comment type="disease" evidence="10">
    <disease id="DI-02060">
        <name>Type 2 diabetes mellitus</name>
        <acronym>T2D</acronym>
        <description>A multifactorial disorder of glucose homeostasis caused by a lack of sensitivity to insulin. Affected individuals usually have an obese body habitus and manifestations of a metabolic syndrome characterized by diabetes, insulin resistance, hypertension and hypertriglyceridemia. The disease results in long-term complications that affect the eyes, kidneys, nerves, and blood vessels.</description>
        <dbReference type="MIM" id="125853"/>
    </disease>
    <text>Disease susceptibility may be associated with variants affecting the gene represented in this entry.</text>
</comment>
<comment type="similarity">
    <text evidence="14">Belongs to the MCF2 family.</text>
</comment>
<comment type="sequence caution" evidence="14">
    <conflict type="erroneous initiation">
        <sequence resource="EMBL-CDS" id="AAO19651"/>
    </conflict>
    <text>Truncated N-terminus.</text>
</comment>
<gene>
    <name type="primary">MCF2L2</name>
    <name type="synonym">ARHGEF22</name>
    <name type="synonym">DRG</name>
    <name type="synonym">KIAA0861</name>
</gene>
<name>MF2L2_HUMAN</name>
<sequence length="1114" mass="126993">MLSCLKEEMPPQELTRRLATVITHVDEIMQQEVRPLMAVEIIEQLHRQFAILSGGRGEDGAPIITFPEFSGFKHIPDEDFLNVMTYLTSIPSVEAASIGFIVVIDRRRDKWSSVKASLTRIAVAFPGNLQLIFILRPSRFIQRTFTDIGIKYYRNEFKTKVPIIMVNSVSDLHGYIDKSQLTRELGGTLEYRHGQWVNHRTAIENFALTLKTTAQMLQTFGSCLATAELPRSMLSTEDLLMSHTRQRDKLQDELKLLGKQGTTLLSCIQEPATKCPNSKLNLNQLENVTTMERLLVQLDETEKAFSHFWSEHHLKLNQCLQLQHFEHDFCKAKLALDNLLEEQAEFTGIGDSVMHVEQILKEHKKLEEKSQEPLEKAQLLALVGDQLIQSHHYAADAIRPRCVELRHLCDDFINGNKKKWDILGKSLEFHRQLDKVSQWCEAGIYLLASQAVDKCQSREGVDIALNDIATFLGTVKEYPLLSPKEFYNEFELLLTLDAKAKAQKVLQRLDDVQEIFHKRQVSLMKLAAKQTRPVQPVAPHPESSPKWVSSKTSQPSTSVPLARPLRTSEEPYTETELNSRGKEDDETKFEVKSEEIFESHHERGNPELEQQARLGDLSPRRRIIRDLLETEEIYIKEIKSIIDGYITPMDFIWLKHLIPDVLQNNKDFLFGNIRELYEFHNRTFLKELEKCAENPELLAHCFLKRKEDLQIYFKYHKNLPRARAIWQECQDCAYFGVCQRQLDHNLPLFKYLKGPSQRLIKYQMLLKGLLDFESPEDMEIDPGELGGSAKDGPKRTKDSAFSTELQQALAVIEDLIKSCELAVDLAAVTECPDDIGKLGKLLLHGPFSVWTIHKDRYKMKDLIRFKPSQRQIYLFERGIVFCKIRMEPGDQGLSPHYSFKKTMKLMTLSIRQLGRGSHRKFEIASRNGLEKYILQAASKEIRDCWFSEISKLLMEQQNNIKDQGNPQFEMSTSKGSGAGSGPWIKNMERATTSKEDPASSTGGIKGCSSREFSSMDTFEDCEGAEDMEKESSALSLAGLFQSDDSHETCSSKSAFLERGESSQGEKEERDEEETATRSTEEERAGASTGRLAPAGATAGFQARALRPRTSAQES</sequence>
<feature type="chain" id="PRO_0000337087" description="Probable guanine nucleotide exchange factor MCF2L2">
    <location>
        <begin position="1"/>
        <end position="1114"/>
    </location>
</feature>
<feature type="domain" description="CRAL-TRIO" evidence="2">
    <location>
        <begin position="11"/>
        <end position="193"/>
    </location>
</feature>
<feature type="repeat" description="Spectrin">
    <location>
        <begin position="323"/>
        <end position="428"/>
    </location>
</feature>
<feature type="domain" description="DH" evidence="3">
    <location>
        <begin position="619"/>
        <end position="822"/>
    </location>
</feature>
<feature type="domain" description="PH" evidence="4">
    <location>
        <begin position="834"/>
        <end position="954"/>
    </location>
</feature>
<feature type="region of interest" description="Disordered" evidence="5">
    <location>
        <begin position="530"/>
        <end position="614"/>
    </location>
</feature>
<feature type="region of interest" description="Disordered" evidence="5">
    <location>
        <begin position="962"/>
        <end position="1114"/>
    </location>
</feature>
<feature type="compositionally biased region" description="Polar residues" evidence="5">
    <location>
        <begin position="546"/>
        <end position="559"/>
    </location>
</feature>
<feature type="compositionally biased region" description="Basic and acidic residues" evidence="5">
    <location>
        <begin position="577"/>
        <end position="606"/>
    </location>
</feature>
<feature type="compositionally biased region" description="Polar residues" evidence="5">
    <location>
        <begin position="962"/>
        <end position="975"/>
    </location>
</feature>
<feature type="compositionally biased region" description="Basic and acidic residues" evidence="5">
    <location>
        <begin position="986"/>
        <end position="997"/>
    </location>
</feature>
<feature type="compositionally biased region" description="Acidic residues" evidence="5">
    <location>
        <begin position="1017"/>
        <end position="1028"/>
    </location>
</feature>
<feature type="compositionally biased region" description="Basic and acidic residues" evidence="5">
    <location>
        <begin position="1043"/>
        <end position="1067"/>
    </location>
</feature>
<feature type="compositionally biased region" description="Basic and acidic residues" evidence="5">
    <location>
        <begin position="1074"/>
        <end position="1084"/>
    </location>
</feature>
<feature type="splice variant" id="VSP_033872" description="In isoform 3." evidence="12">
    <original>RIIRDLL</original>
    <variation>YSSQYFK</variation>
    <location>
        <begin position="622"/>
        <end position="628"/>
    </location>
</feature>
<feature type="splice variant" id="VSP_033873" description="In isoform 3." evidence="12">
    <location>
        <begin position="629"/>
        <end position="1114"/>
    </location>
</feature>
<feature type="splice variant" id="VSP_033874" description="In isoform 2." evidence="13">
    <original>KEDLQI</original>
    <variation>VSLYSQ</variation>
    <location>
        <begin position="706"/>
        <end position="711"/>
    </location>
</feature>
<feature type="splice variant" id="VSP_033875" description="In isoform 2." evidence="13">
    <location>
        <begin position="712"/>
        <end position="1114"/>
    </location>
</feature>
<feature type="splice variant" id="VSP_033876" description="In isoform 4." evidence="13">
    <location>
        <begin position="1075"/>
        <end position="1114"/>
    </location>
</feature>
<feature type="sequence variant" id="VAR_043587" description="In dbSNP:rs12632177." evidence="6">
    <original>T</original>
    <variation>M</variation>
    <location>
        <position position="159"/>
    </location>
</feature>
<feature type="sequence variant" id="VAR_043588" description="In a colorectal cancer sample; somatic mutation." evidence="9">
    <original>L</original>
    <variation>P</variation>
    <location>
        <position position="254"/>
    </location>
</feature>
<feature type="sequence variant" id="VAR_043589" description="In dbSNP:rs13082605.">
    <original>N</original>
    <variation>S</variation>
    <location>
        <position position="277"/>
    </location>
</feature>
<feature type="sequence variant" id="VAR_043590" description="In dbSNP:rs7639705." evidence="7">
    <original>I</original>
    <variation>L</variation>
    <location>
        <position position="359"/>
    </location>
</feature>
<feature type="sequence variant" id="VAR_043591" description="In dbSNP:rs2293203." evidence="8">
    <original>Q</original>
    <variation>L</variation>
    <location>
        <position position="378"/>
    </location>
</feature>
<feature type="sequence variant" id="VAR_043592" description="In dbSNP:rs3732602." evidence="8">
    <original>F</original>
    <variation>S</variation>
    <location>
        <position position="589"/>
    </location>
</feature>
<feature type="sequence variant" id="VAR_043593" description="In a colorectal cancer sample; somatic mutation; dbSNP:rs767614039." evidence="9">
    <original>R</original>
    <variation>H</variation>
    <location>
        <position position="622"/>
    </location>
</feature>
<feature type="sequence variant" id="VAR_043594" description="In dbSNP:rs9826325.">
    <original>F</original>
    <variation>L</variation>
    <location>
        <position position="772"/>
    </location>
</feature>
<feature type="sequence variant" id="VAR_043595" description="In dbSNP:rs6804951." evidence="6 8 11">
    <original>T</original>
    <variation>A</variation>
    <location>
        <position position="902"/>
    </location>
</feature>
<feature type="sequence variant" id="VAR_043596" description="In dbSNP:rs35070271.">
    <original>M</original>
    <variation>T</variation>
    <location>
        <position position="1015"/>
    </location>
</feature>
<feature type="sequence variant" id="VAR_043597" description="In a breast cancer sample; somatic mutation; dbSNP:rs1560327395." evidence="9">
    <original>L</original>
    <variation>F</variation>
    <location>
        <position position="1039"/>
    </location>
</feature>
<feature type="sequence conflict" description="In Ref. 4; AAO19651 and 5; BAA74884." evidence="14" ref="4 5">
    <original>P</original>
    <variation>S</variation>
    <location>
        <position position="373"/>
    </location>
</feature>
<evidence type="ECO:0000250" key="1"/>
<evidence type="ECO:0000255" key="2">
    <source>
        <dbReference type="PROSITE-ProRule" id="PRU00056"/>
    </source>
</evidence>
<evidence type="ECO:0000255" key="3">
    <source>
        <dbReference type="PROSITE-ProRule" id="PRU00062"/>
    </source>
</evidence>
<evidence type="ECO:0000255" key="4">
    <source>
        <dbReference type="PROSITE-ProRule" id="PRU00145"/>
    </source>
</evidence>
<evidence type="ECO:0000256" key="5">
    <source>
        <dbReference type="SAM" id="MobiDB-lite"/>
    </source>
</evidence>
<evidence type="ECO:0000269" key="6">
    <source>
    </source>
</evidence>
<evidence type="ECO:0000269" key="7">
    <source>
    </source>
</evidence>
<evidence type="ECO:0000269" key="8">
    <source>
    </source>
</evidence>
<evidence type="ECO:0000269" key="9">
    <source>
    </source>
</evidence>
<evidence type="ECO:0000269" key="10">
    <source>
    </source>
</evidence>
<evidence type="ECO:0000269" key="11">
    <source ref="4"/>
</evidence>
<evidence type="ECO:0000303" key="12">
    <source>
    </source>
</evidence>
<evidence type="ECO:0000303" key="13">
    <source>
    </source>
</evidence>
<evidence type="ECO:0000305" key="14"/>
<proteinExistence type="evidence at protein level"/>
<keyword id="KW-0025">Alternative splicing</keyword>
<keyword id="KW-0219">Diabetes mellitus</keyword>
<keyword id="KW-0344">Guanine-nucleotide releasing factor</keyword>
<keyword id="KW-1267">Proteomics identification</keyword>
<keyword id="KW-1185">Reference proteome</keyword>
<organism>
    <name type="scientific">Homo sapiens</name>
    <name type="common">Human</name>
    <dbReference type="NCBI Taxonomy" id="9606"/>
    <lineage>
        <taxon>Eukaryota</taxon>
        <taxon>Metazoa</taxon>
        <taxon>Chordata</taxon>
        <taxon>Craniata</taxon>
        <taxon>Vertebrata</taxon>
        <taxon>Euteleostomi</taxon>
        <taxon>Mammalia</taxon>
        <taxon>Eutheria</taxon>
        <taxon>Euarchontoglires</taxon>
        <taxon>Primates</taxon>
        <taxon>Haplorrhini</taxon>
        <taxon>Catarrhini</taxon>
        <taxon>Hominidae</taxon>
        <taxon>Homo</taxon>
    </lineage>
</organism>
<dbReference type="EMBL" id="AK124500">
    <property type="protein sequence ID" value="BAC85866.1"/>
    <property type="molecule type" value="mRNA"/>
</dbReference>
<dbReference type="EMBL" id="AC069417">
    <property type="status" value="NOT_ANNOTATED_CDS"/>
    <property type="molecule type" value="Genomic_DNA"/>
</dbReference>
<dbReference type="EMBL" id="AC092960">
    <property type="status" value="NOT_ANNOTATED_CDS"/>
    <property type="molecule type" value="Genomic_DNA"/>
</dbReference>
<dbReference type="EMBL" id="AC104641">
    <property type="status" value="NOT_ANNOTATED_CDS"/>
    <property type="molecule type" value="Genomic_DNA"/>
</dbReference>
<dbReference type="EMBL" id="AC112647">
    <property type="status" value="NOT_ANNOTATED_CDS"/>
    <property type="molecule type" value="Genomic_DNA"/>
</dbReference>
<dbReference type="EMBL" id="BC029074">
    <property type="protein sequence ID" value="AAH29074.2"/>
    <property type="molecule type" value="mRNA"/>
</dbReference>
<dbReference type="EMBL" id="BC064632">
    <property type="protein sequence ID" value="AAH64632.1"/>
    <property type="molecule type" value="mRNA"/>
</dbReference>
<dbReference type="EMBL" id="AY172737">
    <property type="protein sequence ID" value="AAO19651.1"/>
    <property type="status" value="ALT_INIT"/>
    <property type="molecule type" value="mRNA"/>
</dbReference>
<dbReference type="EMBL" id="AB020668">
    <property type="protein sequence ID" value="BAA74884.1"/>
    <property type="molecule type" value="mRNA"/>
</dbReference>
<dbReference type="CCDS" id="CCDS3243.1">
    <molecule id="Q86YR7-1"/>
</dbReference>
<dbReference type="RefSeq" id="NP_055893.3">
    <molecule id="Q86YR7-1"/>
    <property type="nucleotide sequence ID" value="NM_015078.3"/>
</dbReference>
<dbReference type="SMR" id="Q86YR7"/>
<dbReference type="BioGRID" id="116728">
    <property type="interactions" value="37"/>
</dbReference>
<dbReference type="FunCoup" id="Q86YR7">
    <property type="interactions" value="500"/>
</dbReference>
<dbReference type="IntAct" id="Q86YR7">
    <property type="interactions" value="25"/>
</dbReference>
<dbReference type="STRING" id="9606.ENSP00000328118"/>
<dbReference type="iPTMnet" id="Q86YR7"/>
<dbReference type="PhosphoSitePlus" id="Q86YR7"/>
<dbReference type="BioMuta" id="MCF2L2"/>
<dbReference type="DMDM" id="317373423"/>
<dbReference type="MassIVE" id="Q86YR7"/>
<dbReference type="PaxDb" id="9606-ENSP00000328118"/>
<dbReference type="PeptideAtlas" id="Q86YR7"/>
<dbReference type="ProteomicsDB" id="70457">
    <molecule id="Q86YR7-1"/>
</dbReference>
<dbReference type="ProteomicsDB" id="70458">
    <molecule id="Q86YR7-2"/>
</dbReference>
<dbReference type="ProteomicsDB" id="70459">
    <molecule id="Q86YR7-3"/>
</dbReference>
<dbReference type="ProteomicsDB" id="70460">
    <molecule id="Q86YR7-4"/>
</dbReference>
<dbReference type="Antibodypedia" id="50764">
    <property type="antibodies" value="18 antibodies from 7 providers"/>
</dbReference>
<dbReference type="DNASU" id="23101"/>
<dbReference type="Ensembl" id="ENST00000328913.8">
    <molecule id="Q86YR7-1"/>
    <property type="protein sequence ID" value="ENSP00000328118.3"/>
    <property type="gene ID" value="ENSG00000053524.13"/>
</dbReference>
<dbReference type="Ensembl" id="ENST00000414362.6">
    <molecule id="Q86YR7-3"/>
    <property type="protein sequence ID" value="ENSP00000414131.2"/>
    <property type="gene ID" value="ENSG00000053524.13"/>
</dbReference>
<dbReference type="Ensembl" id="ENST00000447025.6">
    <molecule id="Q86YR7-2"/>
    <property type="protein sequence ID" value="ENSP00000388190.2"/>
    <property type="gene ID" value="ENSG00000053524.13"/>
</dbReference>
<dbReference type="Ensembl" id="ENST00000473233.5">
    <molecule id="Q86YR7-4"/>
    <property type="protein sequence ID" value="ENSP00000420070.1"/>
    <property type="gene ID" value="ENSG00000053524.13"/>
</dbReference>
<dbReference type="GeneID" id="23101"/>
<dbReference type="KEGG" id="hsa:23101"/>
<dbReference type="MANE-Select" id="ENST00000328913.8">
    <property type="protein sequence ID" value="ENSP00000328118.3"/>
    <property type="RefSeq nucleotide sequence ID" value="NM_015078.4"/>
    <property type="RefSeq protein sequence ID" value="NP_055893.4"/>
</dbReference>
<dbReference type="UCSC" id="uc003fli.3">
    <molecule id="Q86YR7-1"/>
    <property type="organism name" value="human"/>
</dbReference>
<dbReference type="AGR" id="HGNC:30319"/>
<dbReference type="CTD" id="23101"/>
<dbReference type="DisGeNET" id="23101"/>
<dbReference type="GeneCards" id="MCF2L2"/>
<dbReference type="HGNC" id="HGNC:30319">
    <property type="gene designation" value="MCF2L2"/>
</dbReference>
<dbReference type="HPA" id="ENSG00000053524">
    <property type="expression patterns" value="Group enriched (brain, retina)"/>
</dbReference>
<dbReference type="MalaCards" id="MCF2L2"/>
<dbReference type="MIM" id="125853">
    <property type="type" value="phenotype"/>
</dbReference>
<dbReference type="MIM" id="619946">
    <property type="type" value="gene"/>
</dbReference>
<dbReference type="neXtProt" id="NX_Q86YR7"/>
<dbReference type="OpenTargets" id="ENSG00000053524"/>
<dbReference type="PharmGKB" id="PA134863801"/>
<dbReference type="VEuPathDB" id="HostDB:ENSG00000053524"/>
<dbReference type="eggNOG" id="KOG4240">
    <property type="taxonomic scope" value="Eukaryota"/>
</dbReference>
<dbReference type="GeneTree" id="ENSGT00940000161734"/>
<dbReference type="HOGENOM" id="CLU_007130_0_0_1"/>
<dbReference type="InParanoid" id="Q86YR7"/>
<dbReference type="OMA" id="KGIVFCK"/>
<dbReference type="OrthoDB" id="10004999at2759"/>
<dbReference type="PAN-GO" id="Q86YR7">
    <property type="GO annotations" value="2 GO annotations based on evolutionary models"/>
</dbReference>
<dbReference type="PhylomeDB" id="Q86YR7"/>
<dbReference type="TreeFam" id="TF318080"/>
<dbReference type="PathwayCommons" id="Q86YR7"/>
<dbReference type="SignaLink" id="Q86YR7"/>
<dbReference type="BioGRID-ORCS" id="23101">
    <property type="hits" value="6 hits in 1142 CRISPR screens"/>
</dbReference>
<dbReference type="ChiTaRS" id="MCF2L2">
    <property type="organism name" value="human"/>
</dbReference>
<dbReference type="GenomeRNAi" id="23101"/>
<dbReference type="Pharos" id="Q86YR7">
    <property type="development level" value="Tbio"/>
</dbReference>
<dbReference type="PRO" id="PR:Q86YR7"/>
<dbReference type="Proteomes" id="UP000005640">
    <property type="component" value="Chromosome 3"/>
</dbReference>
<dbReference type="RNAct" id="Q86YR7">
    <property type="molecule type" value="protein"/>
</dbReference>
<dbReference type="Bgee" id="ENSG00000053524">
    <property type="expression patterns" value="Expressed in right frontal lobe and 98 other cell types or tissues"/>
</dbReference>
<dbReference type="ExpressionAtlas" id="Q86YR7">
    <property type="expression patterns" value="baseline and differential"/>
</dbReference>
<dbReference type="GO" id="GO:0005737">
    <property type="term" value="C:cytoplasm"/>
    <property type="evidence" value="ECO:0000318"/>
    <property type="project" value="GO_Central"/>
</dbReference>
<dbReference type="GO" id="GO:0005829">
    <property type="term" value="C:cytosol"/>
    <property type="evidence" value="ECO:0007669"/>
    <property type="project" value="UniProtKB-ARBA"/>
</dbReference>
<dbReference type="GO" id="GO:0005085">
    <property type="term" value="F:guanyl-nucleotide exchange factor activity"/>
    <property type="evidence" value="ECO:0000318"/>
    <property type="project" value="GO_Central"/>
</dbReference>
<dbReference type="CDD" id="cd00160">
    <property type="entry name" value="RhoGEF"/>
    <property type="match status" value="1"/>
</dbReference>
<dbReference type="CDD" id="cd00170">
    <property type="entry name" value="SEC14"/>
    <property type="match status" value="1"/>
</dbReference>
<dbReference type="CDD" id="cd00176">
    <property type="entry name" value="SPEC"/>
    <property type="match status" value="1"/>
</dbReference>
<dbReference type="Gene3D" id="1.20.58.60">
    <property type="match status" value="1"/>
</dbReference>
<dbReference type="Gene3D" id="1.20.900.10">
    <property type="entry name" value="Dbl homology (DH) domain"/>
    <property type="match status" value="1"/>
</dbReference>
<dbReference type="Gene3D" id="2.30.29.30">
    <property type="entry name" value="Pleckstrin-homology domain (PH domain)/Phosphotyrosine-binding domain (PTB)"/>
    <property type="match status" value="1"/>
</dbReference>
<dbReference type="InterPro" id="IPR001251">
    <property type="entry name" value="CRAL-TRIO_dom"/>
</dbReference>
<dbReference type="InterPro" id="IPR036865">
    <property type="entry name" value="CRAL-TRIO_dom_sf"/>
</dbReference>
<dbReference type="InterPro" id="IPR035899">
    <property type="entry name" value="DBL_dom_sf"/>
</dbReference>
<dbReference type="InterPro" id="IPR000219">
    <property type="entry name" value="DH_dom"/>
</dbReference>
<dbReference type="InterPro" id="IPR011993">
    <property type="entry name" value="PH-like_dom_sf"/>
</dbReference>
<dbReference type="InterPro" id="IPR001849">
    <property type="entry name" value="PH_domain"/>
</dbReference>
<dbReference type="InterPro" id="IPR051336">
    <property type="entry name" value="RhoGEF_Guanine_NuclExch_SF"/>
</dbReference>
<dbReference type="InterPro" id="IPR055251">
    <property type="entry name" value="SOS1_NGEF_PH"/>
</dbReference>
<dbReference type="InterPro" id="IPR018159">
    <property type="entry name" value="Spectrin/alpha-actinin"/>
</dbReference>
<dbReference type="InterPro" id="IPR056466">
    <property type="entry name" value="Spectrin_DBS"/>
</dbReference>
<dbReference type="PANTHER" id="PTHR22826:SF201">
    <property type="entry name" value="GUANINE NUCLEOTIDE EXCHANGE FACTOR MCF2L2-RELATED"/>
    <property type="match status" value="1"/>
</dbReference>
<dbReference type="PANTHER" id="PTHR22826">
    <property type="entry name" value="RHO GUANINE EXCHANGE FACTOR-RELATED"/>
    <property type="match status" value="1"/>
</dbReference>
<dbReference type="Pfam" id="PF13716">
    <property type="entry name" value="CRAL_TRIO_2"/>
    <property type="match status" value="1"/>
</dbReference>
<dbReference type="Pfam" id="PF00621">
    <property type="entry name" value="RhoGEF"/>
    <property type="match status" value="1"/>
</dbReference>
<dbReference type="Pfam" id="PF22697">
    <property type="entry name" value="SOS1_NGEF_PH"/>
    <property type="match status" value="1"/>
</dbReference>
<dbReference type="Pfam" id="PF23289">
    <property type="entry name" value="Spectrin_5"/>
    <property type="match status" value="1"/>
</dbReference>
<dbReference type="SMART" id="SM00233">
    <property type="entry name" value="PH"/>
    <property type="match status" value="1"/>
</dbReference>
<dbReference type="SMART" id="SM00325">
    <property type="entry name" value="RhoGEF"/>
    <property type="match status" value="1"/>
</dbReference>
<dbReference type="SMART" id="SM00516">
    <property type="entry name" value="SEC14"/>
    <property type="match status" value="1"/>
</dbReference>
<dbReference type="SMART" id="SM00150">
    <property type="entry name" value="SPEC"/>
    <property type="match status" value="1"/>
</dbReference>
<dbReference type="SUPFAM" id="SSF52087">
    <property type="entry name" value="CRAL/TRIO domain"/>
    <property type="match status" value="1"/>
</dbReference>
<dbReference type="SUPFAM" id="SSF48065">
    <property type="entry name" value="DBL homology domain (DH-domain)"/>
    <property type="match status" value="1"/>
</dbReference>
<dbReference type="SUPFAM" id="SSF50729">
    <property type="entry name" value="PH domain-like"/>
    <property type="match status" value="1"/>
</dbReference>
<dbReference type="SUPFAM" id="SSF46966">
    <property type="entry name" value="Spectrin repeat"/>
    <property type="match status" value="1"/>
</dbReference>
<dbReference type="PROSITE" id="PS50191">
    <property type="entry name" value="CRAL_TRIO"/>
    <property type="match status" value="1"/>
</dbReference>
<dbReference type="PROSITE" id="PS50010">
    <property type="entry name" value="DH_2"/>
    <property type="match status" value="1"/>
</dbReference>
<dbReference type="PROSITE" id="PS50003">
    <property type="entry name" value="PH_DOMAIN"/>
    <property type="match status" value="1"/>
</dbReference>
<protein>
    <recommendedName>
        <fullName>Probable guanine nucleotide exchange factor MCF2L2</fullName>
    </recommendedName>
    <alternativeName>
        <fullName>Dbs-related Rho family guanine nucleotide exchange factor</fullName>
    </alternativeName>
    <alternativeName>
        <fullName>MCF2-transforming sequence-like protein 2</fullName>
    </alternativeName>
</protein>
<reference key="1">
    <citation type="journal article" date="2004" name="Nat. Genet.">
        <title>Complete sequencing and characterization of 21,243 full-length human cDNAs.</title>
        <authorList>
            <person name="Ota T."/>
            <person name="Suzuki Y."/>
            <person name="Nishikawa T."/>
            <person name="Otsuki T."/>
            <person name="Sugiyama T."/>
            <person name="Irie R."/>
            <person name="Wakamatsu A."/>
            <person name="Hayashi K."/>
            <person name="Sato H."/>
            <person name="Nagai K."/>
            <person name="Kimura K."/>
            <person name="Makita H."/>
            <person name="Sekine M."/>
            <person name="Obayashi M."/>
            <person name="Nishi T."/>
            <person name="Shibahara T."/>
            <person name="Tanaka T."/>
            <person name="Ishii S."/>
            <person name="Yamamoto J."/>
            <person name="Saito K."/>
            <person name="Kawai Y."/>
            <person name="Isono Y."/>
            <person name="Nakamura Y."/>
            <person name="Nagahari K."/>
            <person name="Murakami K."/>
            <person name="Yasuda T."/>
            <person name="Iwayanagi T."/>
            <person name="Wagatsuma M."/>
            <person name="Shiratori A."/>
            <person name="Sudo H."/>
            <person name="Hosoiri T."/>
            <person name="Kaku Y."/>
            <person name="Kodaira H."/>
            <person name="Kondo H."/>
            <person name="Sugawara M."/>
            <person name="Takahashi M."/>
            <person name="Kanda K."/>
            <person name="Yokoi T."/>
            <person name="Furuya T."/>
            <person name="Kikkawa E."/>
            <person name="Omura Y."/>
            <person name="Abe K."/>
            <person name="Kamihara K."/>
            <person name="Katsuta N."/>
            <person name="Sato K."/>
            <person name="Tanikawa M."/>
            <person name="Yamazaki M."/>
            <person name="Ninomiya K."/>
            <person name="Ishibashi T."/>
            <person name="Yamashita H."/>
            <person name="Murakawa K."/>
            <person name="Fujimori K."/>
            <person name="Tanai H."/>
            <person name="Kimata M."/>
            <person name="Watanabe M."/>
            <person name="Hiraoka S."/>
            <person name="Chiba Y."/>
            <person name="Ishida S."/>
            <person name="Ono Y."/>
            <person name="Takiguchi S."/>
            <person name="Watanabe S."/>
            <person name="Yosida M."/>
            <person name="Hotuta T."/>
            <person name="Kusano J."/>
            <person name="Kanehori K."/>
            <person name="Takahashi-Fujii A."/>
            <person name="Hara H."/>
            <person name="Tanase T.-O."/>
            <person name="Nomura Y."/>
            <person name="Togiya S."/>
            <person name="Komai F."/>
            <person name="Hara R."/>
            <person name="Takeuchi K."/>
            <person name="Arita M."/>
            <person name="Imose N."/>
            <person name="Musashino K."/>
            <person name="Yuuki H."/>
            <person name="Oshima A."/>
            <person name="Sasaki N."/>
            <person name="Aotsuka S."/>
            <person name="Yoshikawa Y."/>
            <person name="Matsunawa H."/>
            <person name="Ichihara T."/>
            <person name="Shiohata N."/>
            <person name="Sano S."/>
            <person name="Moriya S."/>
            <person name="Momiyama H."/>
            <person name="Satoh N."/>
            <person name="Takami S."/>
            <person name="Terashima Y."/>
            <person name="Suzuki O."/>
            <person name="Nakagawa S."/>
            <person name="Senoh A."/>
            <person name="Mizoguchi H."/>
            <person name="Goto Y."/>
            <person name="Shimizu F."/>
            <person name="Wakebe H."/>
            <person name="Hishigaki H."/>
            <person name="Watanabe T."/>
            <person name="Sugiyama A."/>
            <person name="Takemoto M."/>
            <person name="Kawakami B."/>
            <person name="Yamazaki M."/>
            <person name="Watanabe K."/>
            <person name="Kumagai A."/>
            <person name="Itakura S."/>
            <person name="Fukuzumi Y."/>
            <person name="Fujimori Y."/>
            <person name="Komiyama M."/>
            <person name="Tashiro H."/>
            <person name="Tanigami A."/>
            <person name="Fujiwara T."/>
            <person name="Ono T."/>
            <person name="Yamada K."/>
            <person name="Fujii Y."/>
            <person name="Ozaki K."/>
            <person name="Hirao M."/>
            <person name="Ohmori Y."/>
            <person name="Kawabata A."/>
            <person name="Hikiji T."/>
            <person name="Kobatake N."/>
            <person name="Inagaki H."/>
            <person name="Ikema Y."/>
            <person name="Okamoto S."/>
            <person name="Okitani R."/>
            <person name="Kawakami T."/>
            <person name="Noguchi S."/>
            <person name="Itoh T."/>
            <person name="Shigeta K."/>
            <person name="Senba T."/>
            <person name="Matsumura K."/>
            <person name="Nakajima Y."/>
            <person name="Mizuno T."/>
            <person name="Morinaga M."/>
            <person name="Sasaki M."/>
            <person name="Togashi T."/>
            <person name="Oyama M."/>
            <person name="Hata H."/>
            <person name="Watanabe M."/>
            <person name="Komatsu T."/>
            <person name="Mizushima-Sugano J."/>
            <person name="Satoh T."/>
            <person name="Shirai Y."/>
            <person name="Takahashi Y."/>
            <person name="Nakagawa K."/>
            <person name="Okumura K."/>
            <person name="Nagase T."/>
            <person name="Nomura N."/>
            <person name="Kikuchi H."/>
            <person name="Masuho Y."/>
            <person name="Yamashita R."/>
            <person name="Nakai K."/>
            <person name="Yada T."/>
            <person name="Nakamura Y."/>
            <person name="Ohara O."/>
            <person name="Isogai T."/>
            <person name="Sugano S."/>
        </authorList>
    </citation>
    <scope>NUCLEOTIDE SEQUENCE [LARGE SCALE MRNA] (ISOFORM 3)</scope>
    <scope>VARIANT LEU-359</scope>
    <source>
        <tissue>Cerebellum</tissue>
    </source>
</reference>
<reference key="2">
    <citation type="journal article" date="2006" name="Nature">
        <title>The DNA sequence, annotation and analysis of human chromosome 3.</title>
        <authorList>
            <person name="Muzny D.M."/>
            <person name="Scherer S.E."/>
            <person name="Kaul R."/>
            <person name="Wang J."/>
            <person name="Yu J."/>
            <person name="Sudbrak R."/>
            <person name="Buhay C.J."/>
            <person name="Chen R."/>
            <person name="Cree A."/>
            <person name="Ding Y."/>
            <person name="Dugan-Rocha S."/>
            <person name="Gill R."/>
            <person name="Gunaratne P."/>
            <person name="Harris R.A."/>
            <person name="Hawes A.C."/>
            <person name="Hernandez J."/>
            <person name="Hodgson A.V."/>
            <person name="Hume J."/>
            <person name="Jackson A."/>
            <person name="Khan Z.M."/>
            <person name="Kovar-Smith C."/>
            <person name="Lewis L.R."/>
            <person name="Lozado R.J."/>
            <person name="Metzker M.L."/>
            <person name="Milosavljevic A."/>
            <person name="Miner G.R."/>
            <person name="Morgan M.B."/>
            <person name="Nazareth L.V."/>
            <person name="Scott G."/>
            <person name="Sodergren E."/>
            <person name="Song X.-Z."/>
            <person name="Steffen D."/>
            <person name="Wei S."/>
            <person name="Wheeler D.A."/>
            <person name="Wright M.W."/>
            <person name="Worley K.C."/>
            <person name="Yuan Y."/>
            <person name="Zhang Z."/>
            <person name="Adams C.Q."/>
            <person name="Ansari-Lari M.A."/>
            <person name="Ayele M."/>
            <person name="Brown M.J."/>
            <person name="Chen G."/>
            <person name="Chen Z."/>
            <person name="Clendenning J."/>
            <person name="Clerc-Blankenburg K.P."/>
            <person name="Chen R."/>
            <person name="Chen Z."/>
            <person name="Davis C."/>
            <person name="Delgado O."/>
            <person name="Dinh H.H."/>
            <person name="Dong W."/>
            <person name="Draper H."/>
            <person name="Ernst S."/>
            <person name="Fu G."/>
            <person name="Gonzalez-Garay M.L."/>
            <person name="Garcia D.K."/>
            <person name="Gillett W."/>
            <person name="Gu J."/>
            <person name="Hao B."/>
            <person name="Haugen E."/>
            <person name="Havlak P."/>
            <person name="He X."/>
            <person name="Hennig S."/>
            <person name="Hu S."/>
            <person name="Huang W."/>
            <person name="Jackson L.R."/>
            <person name="Jacob L.S."/>
            <person name="Kelly S.H."/>
            <person name="Kube M."/>
            <person name="Levy R."/>
            <person name="Li Z."/>
            <person name="Liu B."/>
            <person name="Liu J."/>
            <person name="Liu W."/>
            <person name="Lu J."/>
            <person name="Maheshwari M."/>
            <person name="Nguyen B.-V."/>
            <person name="Okwuonu G.O."/>
            <person name="Palmeiri A."/>
            <person name="Pasternak S."/>
            <person name="Perez L.M."/>
            <person name="Phelps K.A."/>
            <person name="Plopper F.J."/>
            <person name="Qiang B."/>
            <person name="Raymond C."/>
            <person name="Rodriguez R."/>
            <person name="Saenphimmachak C."/>
            <person name="Santibanez J."/>
            <person name="Shen H."/>
            <person name="Shen Y."/>
            <person name="Subramanian S."/>
            <person name="Tabor P.E."/>
            <person name="Verduzco D."/>
            <person name="Waldron L."/>
            <person name="Wang J."/>
            <person name="Wang J."/>
            <person name="Wang Q."/>
            <person name="Williams G.A."/>
            <person name="Wong G.K.-S."/>
            <person name="Yao Z."/>
            <person name="Zhang J."/>
            <person name="Zhang X."/>
            <person name="Zhao G."/>
            <person name="Zhou J."/>
            <person name="Zhou Y."/>
            <person name="Nelson D."/>
            <person name="Lehrach H."/>
            <person name="Reinhardt R."/>
            <person name="Naylor S.L."/>
            <person name="Yang H."/>
            <person name="Olson M."/>
            <person name="Weinstock G."/>
            <person name="Gibbs R.A."/>
        </authorList>
    </citation>
    <scope>NUCLEOTIDE SEQUENCE [LARGE SCALE GENOMIC DNA]</scope>
</reference>
<reference key="3">
    <citation type="journal article" date="2004" name="Genome Res.">
        <title>The status, quality, and expansion of the NIH full-length cDNA project: the Mammalian Gene Collection (MGC).</title>
        <authorList>
            <consortium name="The MGC Project Team"/>
        </authorList>
    </citation>
    <scope>NUCLEOTIDE SEQUENCE [LARGE SCALE MRNA] (ISOFORM 2)</scope>
    <scope>NUCLEOTIDE SEQUENCE [LARGE SCALE MRNA] OF 804-1114 (ISOFORM 4)</scope>
    <scope>VARIANTS LEU-378; SER-589 AND ALA-902</scope>
    <source>
        <tissue>Brain</tissue>
        <tissue>Pancreas</tissue>
    </source>
</reference>
<reference key="4">
    <citation type="submission" date="2002-11" db="EMBL/GenBank/DDBJ databases">
        <title>DRG, a novel guanine-nucleotide exchange factor for Rho family.</title>
        <authorList>
            <person name="Yamauchi J."/>
            <person name="Miyamoto Y."/>
            <person name="Itoh H."/>
        </authorList>
    </citation>
    <scope>NUCLEOTIDE SEQUENCE [MRNA] OF 57-1114 (ISOFORM 1)</scope>
    <scope>VARIANT ALA-902</scope>
</reference>
<reference key="5">
    <citation type="journal article" date="1998" name="DNA Res.">
        <title>Prediction of the coding sequences of unidentified human genes. XII. The complete sequences of 100 new cDNA clones from brain which code for large proteins in vitro.</title>
        <authorList>
            <person name="Nagase T."/>
            <person name="Ishikawa K."/>
            <person name="Suyama M."/>
            <person name="Kikuno R."/>
            <person name="Hirosawa M."/>
            <person name="Miyajima N."/>
            <person name="Tanaka A."/>
            <person name="Kotani H."/>
            <person name="Nomura N."/>
            <person name="Ohara O."/>
        </authorList>
    </citation>
    <scope>NUCLEOTIDE SEQUENCE [LARGE SCALE MRNA] OF 133-1114 (ISOFORM 1)</scope>
    <scope>VARIANTS MET-159 AND ALA-902</scope>
    <source>
        <tissue>Brain</tissue>
    </source>
</reference>
<reference key="6">
    <citation type="journal article" date="2008" name="J. Hum. Genet.">
        <title>Search for type 2 diabetes susceptibility genes on chromosomes 1q, 3q and 12q.</title>
        <authorList>
            <person name="Takeuchi F."/>
            <person name="Ochiai Y."/>
            <person name="Serizawa M."/>
            <person name="Yanai K."/>
            <person name="Kuzuya N."/>
            <person name="Kajio H."/>
            <person name="Honjo S."/>
            <person name="Takeda N."/>
            <person name="Kaburagi Y."/>
            <person name="Yasuda K."/>
            <person name="Shirasawa S."/>
            <person name="Sasazuki T."/>
            <person name="Kato N."/>
        </authorList>
    </citation>
    <scope>INVOLVEMENT IN T2D</scope>
    <scope>TISSUE SPECIFICITY</scope>
</reference>
<reference key="7">
    <citation type="journal article" date="2006" name="Science">
        <title>The consensus coding sequences of human breast and colorectal cancers.</title>
        <authorList>
            <person name="Sjoeblom T."/>
            <person name="Jones S."/>
            <person name="Wood L.D."/>
            <person name="Parsons D.W."/>
            <person name="Lin J."/>
            <person name="Barber T.D."/>
            <person name="Mandelker D."/>
            <person name="Leary R.J."/>
            <person name="Ptak J."/>
            <person name="Silliman N."/>
            <person name="Szabo S."/>
            <person name="Buckhaults P."/>
            <person name="Farrell C."/>
            <person name="Meeh P."/>
            <person name="Markowitz S.D."/>
            <person name="Willis J."/>
            <person name="Dawson D."/>
            <person name="Willson J.K.V."/>
            <person name="Gazdar A.F."/>
            <person name="Hartigan J."/>
            <person name="Wu L."/>
            <person name="Liu C."/>
            <person name="Parmigiani G."/>
            <person name="Park B.H."/>
            <person name="Bachman K.E."/>
            <person name="Papadopoulos N."/>
            <person name="Vogelstein B."/>
            <person name="Kinzler K.W."/>
            <person name="Velculescu V.E."/>
        </authorList>
    </citation>
    <scope>VARIANTS [LARGE SCALE ANALYSIS] PRO-254; HIS-622 AND PHE-1039</scope>
</reference>
<accession>Q86YR7</accession>
<accession>O94942</accession>
<accession>Q6P2B8</accession>
<accession>Q6ZVJ5</accession>
<accession>Q8N318</accession>